<keyword id="KW-0560">Oxidoreductase</keyword>
<keyword id="KW-0663">Pyridoxal phosphate</keyword>
<comment type="function">
    <text evidence="1">The glycine cleavage system catalyzes the degradation of glycine. The P protein binds the alpha-amino group of glycine through its pyridoxal phosphate cofactor; CO(2) is released and the remaining methylamine moiety is then transferred to the lipoamide cofactor of the H protein.</text>
</comment>
<comment type="catalytic activity">
    <reaction evidence="1">
        <text>N(6)-[(R)-lipoyl]-L-lysyl-[glycine-cleavage complex H protein] + glycine + H(+) = N(6)-[(R)-S(8)-aminomethyldihydrolipoyl]-L-lysyl-[glycine-cleavage complex H protein] + CO2</text>
        <dbReference type="Rhea" id="RHEA:24304"/>
        <dbReference type="Rhea" id="RHEA-COMP:10494"/>
        <dbReference type="Rhea" id="RHEA-COMP:10495"/>
        <dbReference type="ChEBI" id="CHEBI:15378"/>
        <dbReference type="ChEBI" id="CHEBI:16526"/>
        <dbReference type="ChEBI" id="CHEBI:57305"/>
        <dbReference type="ChEBI" id="CHEBI:83099"/>
        <dbReference type="ChEBI" id="CHEBI:83143"/>
        <dbReference type="EC" id="1.4.4.2"/>
    </reaction>
</comment>
<comment type="cofactor">
    <cofactor evidence="1">
        <name>pyridoxal 5'-phosphate</name>
        <dbReference type="ChEBI" id="CHEBI:597326"/>
    </cofactor>
</comment>
<comment type="subunit">
    <text evidence="1">The glycine cleavage system is composed of four proteins: P, T, L and H.</text>
</comment>
<comment type="similarity">
    <text evidence="1">Belongs to the GcvP family.</text>
</comment>
<name>GCSP_RALPJ</name>
<evidence type="ECO:0000255" key="1">
    <source>
        <dbReference type="HAMAP-Rule" id="MF_00711"/>
    </source>
</evidence>
<dbReference type="EC" id="1.4.4.2" evidence="1"/>
<dbReference type="EMBL" id="CP001068">
    <property type="protein sequence ID" value="ACD28609.1"/>
    <property type="molecule type" value="Genomic_DNA"/>
</dbReference>
<dbReference type="SMR" id="B2UG82"/>
<dbReference type="STRING" id="402626.Rpic_3489"/>
<dbReference type="KEGG" id="rpi:Rpic_3489"/>
<dbReference type="eggNOG" id="COG0403">
    <property type="taxonomic scope" value="Bacteria"/>
</dbReference>
<dbReference type="eggNOG" id="COG1003">
    <property type="taxonomic scope" value="Bacteria"/>
</dbReference>
<dbReference type="HOGENOM" id="CLU_004620_2_1_4"/>
<dbReference type="GO" id="GO:0005829">
    <property type="term" value="C:cytosol"/>
    <property type="evidence" value="ECO:0007669"/>
    <property type="project" value="TreeGrafter"/>
</dbReference>
<dbReference type="GO" id="GO:0005960">
    <property type="term" value="C:glycine cleavage complex"/>
    <property type="evidence" value="ECO:0007669"/>
    <property type="project" value="TreeGrafter"/>
</dbReference>
<dbReference type="GO" id="GO:0016594">
    <property type="term" value="F:glycine binding"/>
    <property type="evidence" value="ECO:0007669"/>
    <property type="project" value="TreeGrafter"/>
</dbReference>
<dbReference type="GO" id="GO:0004375">
    <property type="term" value="F:glycine dehydrogenase (decarboxylating) activity"/>
    <property type="evidence" value="ECO:0007669"/>
    <property type="project" value="UniProtKB-EC"/>
</dbReference>
<dbReference type="GO" id="GO:0030170">
    <property type="term" value="F:pyridoxal phosphate binding"/>
    <property type="evidence" value="ECO:0007669"/>
    <property type="project" value="TreeGrafter"/>
</dbReference>
<dbReference type="GO" id="GO:0019464">
    <property type="term" value="P:glycine decarboxylation via glycine cleavage system"/>
    <property type="evidence" value="ECO:0007669"/>
    <property type="project" value="UniProtKB-UniRule"/>
</dbReference>
<dbReference type="CDD" id="cd00613">
    <property type="entry name" value="GDC-P"/>
    <property type="match status" value="2"/>
</dbReference>
<dbReference type="FunFam" id="3.40.640.10:FF:000005">
    <property type="entry name" value="Glycine dehydrogenase (decarboxylating), mitochondrial"/>
    <property type="match status" value="1"/>
</dbReference>
<dbReference type="FunFam" id="3.90.1150.10:FF:000007">
    <property type="entry name" value="Glycine dehydrogenase (decarboxylating), mitochondrial"/>
    <property type="match status" value="1"/>
</dbReference>
<dbReference type="FunFam" id="3.40.640.10:FF:000007">
    <property type="entry name" value="glycine dehydrogenase (Decarboxylating), mitochondrial"/>
    <property type="match status" value="1"/>
</dbReference>
<dbReference type="Gene3D" id="3.90.1150.10">
    <property type="entry name" value="Aspartate Aminotransferase, domain 1"/>
    <property type="match status" value="2"/>
</dbReference>
<dbReference type="Gene3D" id="3.40.640.10">
    <property type="entry name" value="Type I PLP-dependent aspartate aminotransferase-like (Major domain)"/>
    <property type="match status" value="2"/>
</dbReference>
<dbReference type="HAMAP" id="MF_00711">
    <property type="entry name" value="GcvP"/>
    <property type="match status" value="1"/>
</dbReference>
<dbReference type="InterPro" id="IPR003437">
    <property type="entry name" value="GcvP"/>
</dbReference>
<dbReference type="InterPro" id="IPR049316">
    <property type="entry name" value="GDC-P_C"/>
</dbReference>
<dbReference type="InterPro" id="IPR049315">
    <property type="entry name" value="GDC-P_N"/>
</dbReference>
<dbReference type="InterPro" id="IPR020581">
    <property type="entry name" value="GDC_P"/>
</dbReference>
<dbReference type="InterPro" id="IPR015424">
    <property type="entry name" value="PyrdxlP-dep_Trfase"/>
</dbReference>
<dbReference type="InterPro" id="IPR015421">
    <property type="entry name" value="PyrdxlP-dep_Trfase_major"/>
</dbReference>
<dbReference type="InterPro" id="IPR015422">
    <property type="entry name" value="PyrdxlP-dep_Trfase_small"/>
</dbReference>
<dbReference type="NCBIfam" id="TIGR00461">
    <property type="entry name" value="gcvP"/>
    <property type="match status" value="1"/>
</dbReference>
<dbReference type="NCBIfam" id="NF003346">
    <property type="entry name" value="PRK04366.1"/>
    <property type="match status" value="1"/>
</dbReference>
<dbReference type="PANTHER" id="PTHR11773:SF1">
    <property type="entry name" value="GLYCINE DEHYDROGENASE (DECARBOXYLATING), MITOCHONDRIAL"/>
    <property type="match status" value="1"/>
</dbReference>
<dbReference type="PANTHER" id="PTHR11773">
    <property type="entry name" value="GLYCINE DEHYDROGENASE, DECARBOXYLATING"/>
    <property type="match status" value="1"/>
</dbReference>
<dbReference type="Pfam" id="PF21478">
    <property type="entry name" value="GcvP2_C"/>
    <property type="match status" value="1"/>
</dbReference>
<dbReference type="Pfam" id="PF02347">
    <property type="entry name" value="GDC-P"/>
    <property type="match status" value="2"/>
</dbReference>
<dbReference type="SUPFAM" id="SSF53383">
    <property type="entry name" value="PLP-dependent transferases"/>
    <property type="match status" value="2"/>
</dbReference>
<protein>
    <recommendedName>
        <fullName evidence="1">Glycine dehydrogenase (decarboxylating)</fullName>
        <ecNumber evidence="1">1.4.4.2</ecNumber>
    </recommendedName>
    <alternativeName>
        <fullName evidence="1">Glycine cleavage system P-protein</fullName>
    </alternativeName>
    <alternativeName>
        <fullName evidence="1">Glycine decarboxylase</fullName>
    </alternativeName>
    <alternativeName>
        <fullName evidence="1">Glycine dehydrogenase (aminomethyl-transferring)</fullName>
    </alternativeName>
</protein>
<organism>
    <name type="scientific">Ralstonia pickettii (strain 12J)</name>
    <dbReference type="NCBI Taxonomy" id="402626"/>
    <lineage>
        <taxon>Bacteria</taxon>
        <taxon>Pseudomonadati</taxon>
        <taxon>Pseudomonadota</taxon>
        <taxon>Betaproteobacteria</taxon>
        <taxon>Burkholderiales</taxon>
        <taxon>Burkholderiaceae</taxon>
        <taxon>Ralstonia</taxon>
    </lineage>
</organism>
<reference key="1">
    <citation type="submission" date="2008-05" db="EMBL/GenBank/DDBJ databases">
        <title>Complete sequence of chromosome 1 of Ralstonia pickettii 12J.</title>
        <authorList>
            <person name="Lucas S."/>
            <person name="Copeland A."/>
            <person name="Lapidus A."/>
            <person name="Glavina del Rio T."/>
            <person name="Dalin E."/>
            <person name="Tice H."/>
            <person name="Bruce D."/>
            <person name="Goodwin L."/>
            <person name="Pitluck S."/>
            <person name="Meincke L."/>
            <person name="Brettin T."/>
            <person name="Detter J.C."/>
            <person name="Han C."/>
            <person name="Kuske C.R."/>
            <person name="Schmutz J."/>
            <person name="Larimer F."/>
            <person name="Land M."/>
            <person name="Hauser L."/>
            <person name="Kyrpides N."/>
            <person name="Mikhailova N."/>
            <person name="Marsh T."/>
            <person name="Richardson P."/>
        </authorList>
    </citation>
    <scope>NUCLEOTIDE SEQUENCE [LARGE SCALE GENOMIC DNA]</scope>
    <source>
        <strain>12J</strain>
    </source>
</reference>
<proteinExistence type="inferred from homology"/>
<sequence length="979" mass="104515">MNAPHPASSALAAERPTLADLEARDAFAHRHIGPSADEQTAMLGTLGYTSRAALIDAVIPPAIRRQDGMPLGEFTQPLTEEAALAKLRGIAGQNRVVKSLIGQGYYGTHTPGVILRNILENPAWYTAYTPYQPEISQGRLEAMLNFQQMVIDLTAMDIANASMLDEATAAAEAMTLLQRIGKSKSTVFFVADDVLPQTLEVVRTRAEPIGVQVVTGPAADAAKHDAFGVLLQYPGANGALLGDLATYQALTDAVHAAGGLVVAAADLLALTLLAAPGEWGADVVIGNTQRFGVPFGFGGPHAGYMAVRDAFKRSMPGRLVGVTIDAQGNPAYRLALQTREQHIRREKATSNICTAQVLLGVMASMYAVYHGPQGLKRIAQRVHRLSATLAAGLRAIGYTLESDAFFDTLTVVTGPRTANLHIAAQAHGINLRQIDDARLGISLDETVTRADVVALWEVFAHAAHAAAPDFDQTEAGVADAYPASLVRQSAYLTHPVFNAHHSEHEMLRYLRSLADKDLALDRTMIPLGSCTMKLNATAEMLPVTWPEFSNIHPFAPADQTVGYREMIDQLEQMLCAATGYAAVSLQPNAGSQGEYAGLLIIHAYHASRGEAHRNVCLIPSSAHGTNPASAQMAGMQVVVVACDERGNVDLADLEKKAAEHSKNLAAIMITYPSTHGVFEEGVKRVCEIVHSHGGQVYVDGANMNAMVGTAAPGHFGGDVSHLNLHKTFCIPHGGGGPGVGPVAVGAHLAPFLPGRAASGEDASQNIGNVSASAFGSASILPISWMYIAMMGAAGLTAATETAILSANYVAKRLAPYYPVLYTGAHGLVAHECILDIRPLQKESGISNEDIAKRLMDFGFHAPTMSFPVPGTLMIEPTESEPKVELDRFIDAMIAIRGEVDKVISGEFDREDNPLKHAPHTAAVVMADDWSHKYTREQAAYPVASLRARKYWPPVGRADNVYGDRNLFCACVPMSEYAQD</sequence>
<gene>
    <name evidence="1" type="primary">gcvP</name>
    <name type="ordered locus">Rpic_3489</name>
</gene>
<accession>B2UG82</accession>
<feature type="chain" id="PRO_1000132447" description="Glycine dehydrogenase (decarboxylating)">
    <location>
        <begin position="1"/>
        <end position="979"/>
    </location>
</feature>
<feature type="modified residue" description="N6-(pyridoxal phosphate)lysine" evidence="1">
    <location>
        <position position="726"/>
    </location>
</feature>